<organism>
    <name type="scientific">Aquifex aeolicus (strain VF5)</name>
    <dbReference type="NCBI Taxonomy" id="224324"/>
    <lineage>
        <taxon>Bacteria</taxon>
        <taxon>Pseudomonadati</taxon>
        <taxon>Aquificota</taxon>
        <taxon>Aquificia</taxon>
        <taxon>Aquificales</taxon>
        <taxon>Aquificaceae</taxon>
        <taxon>Aquifex</taxon>
    </lineage>
</organism>
<sequence length="350" mass="39715">MAEEHKTERATPYKRRKVREEGNVAKSHEIASSLVVLLSLLLLLFLGTYIAKEVILIFLAVTGYVHADISELGSLYENFYENIVKVLTPLFFLALLVVILSHVAQFGFIFTLKPLSFKWERINPFEGIKRLISLTTLFETVKNTLKAFLLIGIAVFVLKGSLYFFLSSSTYPLAETLKSFIKTSAITLITLGVVALLIAFLDYAFKRWQYEKKIMMSRRELKEEYKQLEGHPEVKSRIKARMRELAKSRMMAEVPKATVVITNPTHIAIALKYNPEKDKAPVVVAKGKGTIAQKIVEIAENYSIPVVRKPELARALYPAVEVGKEISPKFYKAVAEIIAYVMFKKKKVYA</sequence>
<protein>
    <recommendedName>
        <fullName>Flagellar biosynthetic protein FlhB</fullName>
    </recommendedName>
</protein>
<accession>O67813</accession>
<gene>
    <name type="primary">flhB</name>
    <name type="ordered locus">aq_2014</name>
</gene>
<keyword id="KW-0002">3D-structure</keyword>
<keyword id="KW-1005">Bacterial flagellum biogenesis</keyword>
<keyword id="KW-1006">Bacterial flagellum protein export</keyword>
<keyword id="KW-0997">Cell inner membrane</keyword>
<keyword id="KW-1003">Cell membrane</keyword>
<keyword id="KW-0472">Membrane</keyword>
<keyword id="KW-0653">Protein transport</keyword>
<keyword id="KW-1185">Reference proteome</keyword>
<keyword id="KW-0812">Transmembrane</keyword>
<keyword id="KW-1133">Transmembrane helix</keyword>
<keyword id="KW-0813">Transport</keyword>
<name>FLHB_AQUAE</name>
<feature type="chain" id="PRO_0000180943" description="Flagellar biosynthetic protein FlhB">
    <location>
        <begin position="1"/>
        <end position="350"/>
    </location>
</feature>
<feature type="transmembrane region" description="Helical" evidence="2">
    <location>
        <begin position="30"/>
        <end position="50"/>
    </location>
</feature>
<feature type="transmembrane region" description="Helical" evidence="2">
    <location>
        <begin position="90"/>
        <end position="110"/>
    </location>
</feature>
<feature type="transmembrane region" description="Helical" evidence="2">
    <location>
        <begin position="147"/>
        <end position="167"/>
    </location>
</feature>
<feature type="transmembrane region" description="Helical" evidence="2">
    <location>
        <begin position="185"/>
        <end position="205"/>
    </location>
</feature>
<feature type="helix" evidence="4">
    <location>
        <begin position="233"/>
        <end position="252"/>
    </location>
</feature>
<feature type="helix" evidence="4">
    <location>
        <begin position="254"/>
        <end position="256"/>
    </location>
</feature>
<feature type="strand" evidence="4">
    <location>
        <begin position="258"/>
        <end position="262"/>
    </location>
</feature>
<feature type="strand" evidence="4">
    <location>
        <begin position="267"/>
        <end position="272"/>
    </location>
</feature>
<feature type="turn" evidence="4">
    <location>
        <begin position="275"/>
        <end position="277"/>
    </location>
</feature>
<feature type="strand" evidence="4">
    <location>
        <begin position="282"/>
        <end position="288"/>
    </location>
</feature>
<feature type="helix" evidence="4">
    <location>
        <begin position="290"/>
        <end position="302"/>
    </location>
</feature>
<feature type="strand" evidence="4">
    <location>
        <begin position="306"/>
        <end position="308"/>
    </location>
</feature>
<feature type="helix" evidence="4">
    <location>
        <begin position="310"/>
        <end position="316"/>
    </location>
</feature>
<feature type="turn" evidence="4">
    <location>
        <begin position="317"/>
        <end position="319"/>
    </location>
</feature>
<feature type="helix" evidence="4">
    <location>
        <begin position="328"/>
        <end position="330"/>
    </location>
</feature>
<feature type="helix" evidence="4">
    <location>
        <begin position="331"/>
        <end position="347"/>
    </location>
</feature>
<comment type="function">
    <text evidence="1">Required for formation of the rod structure in the basal body of the flagellar apparatus. Together with FliI and FliH, may constitute the export apparatus of flagellin (By similarity).</text>
</comment>
<comment type="subcellular location">
    <subcellularLocation>
        <location evidence="3">Cell inner membrane</location>
        <topology evidence="3">Multi-pass membrane protein</topology>
    </subcellularLocation>
</comment>
<comment type="similarity">
    <text evidence="3">Belongs to the type III secretion exporter family.</text>
</comment>
<evidence type="ECO:0000250" key="1"/>
<evidence type="ECO:0000255" key="2"/>
<evidence type="ECO:0000305" key="3"/>
<evidence type="ECO:0007829" key="4">
    <source>
        <dbReference type="PDB" id="3B1S"/>
    </source>
</evidence>
<dbReference type="EMBL" id="AE000657">
    <property type="protein sequence ID" value="AAC07777.1"/>
    <property type="molecule type" value="Genomic_DNA"/>
</dbReference>
<dbReference type="PIR" id="A70473">
    <property type="entry name" value="A70473"/>
</dbReference>
<dbReference type="RefSeq" id="NP_214382.1">
    <property type="nucleotide sequence ID" value="NC_000918.1"/>
</dbReference>
<dbReference type="RefSeq" id="WP_010881318.1">
    <property type="nucleotide sequence ID" value="NC_000918.1"/>
</dbReference>
<dbReference type="PDB" id="3B1S">
    <property type="method" value="X-ray"/>
    <property type="resolution" value="2.55 A"/>
    <property type="chains" value="A/C/E=213-263, B/D/F=264-350"/>
</dbReference>
<dbReference type="PDBsum" id="3B1S"/>
<dbReference type="SMR" id="O67813"/>
<dbReference type="FunCoup" id="O67813">
    <property type="interactions" value="59"/>
</dbReference>
<dbReference type="STRING" id="224324.aq_2014"/>
<dbReference type="MEROPS" id="N06.A01"/>
<dbReference type="EnsemblBacteria" id="AAC07777">
    <property type="protein sequence ID" value="AAC07777"/>
    <property type="gene ID" value="aq_2014"/>
</dbReference>
<dbReference type="KEGG" id="aae:aq_2014"/>
<dbReference type="PATRIC" id="fig|224324.8.peg.1557"/>
<dbReference type="eggNOG" id="COG1377">
    <property type="taxonomic scope" value="Bacteria"/>
</dbReference>
<dbReference type="HOGENOM" id="CLU_041013_1_2_0"/>
<dbReference type="InParanoid" id="O67813"/>
<dbReference type="OrthoDB" id="9807950at2"/>
<dbReference type="EvolutionaryTrace" id="O67813"/>
<dbReference type="Proteomes" id="UP000000798">
    <property type="component" value="Chromosome"/>
</dbReference>
<dbReference type="GO" id="GO:0005886">
    <property type="term" value="C:plasma membrane"/>
    <property type="evidence" value="ECO:0000318"/>
    <property type="project" value="GO_Central"/>
</dbReference>
<dbReference type="GO" id="GO:0044780">
    <property type="term" value="P:bacterial-type flagellum assembly"/>
    <property type="evidence" value="ECO:0007669"/>
    <property type="project" value="InterPro"/>
</dbReference>
<dbReference type="GO" id="GO:0009306">
    <property type="term" value="P:protein secretion"/>
    <property type="evidence" value="ECO:0007669"/>
    <property type="project" value="InterPro"/>
</dbReference>
<dbReference type="Gene3D" id="6.10.250.2080">
    <property type="match status" value="1"/>
</dbReference>
<dbReference type="Gene3D" id="3.40.1690.10">
    <property type="entry name" value="secretion proteins EscU"/>
    <property type="match status" value="1"/>
</dbReference>
<dbReference type="InterPro" id="IPR006136">
    <property type="entry name" value="FlhB"/>
</dbReference>
<dbReference type="InterPro" id="IPR006135">
    <property type="entry name" value="T3SS_substrate_exporter"/>
</dbReference>
<dbReference type="InterPro" id="IPR029025">
    <property type="entry name" value="T3SS_substrate_exporter_C"/>
</dbReference>
<dbReference type="NCBIfam" id="TIGR00328">
    <property type="entry name" value="flhB"/>
    <property type="match status" value="1"/>
</dbReference>
<dbReference type="PANTHER" id="PTHR30531">
    <property type="entry name" value="FLAGELLAR BIOSYNTHETIC PROTEIN FLHB"/>
    <property type="match status" value="1"/>
</dbReference>
<dbReference type="PANTHER" id="PTHR30531:SF12">
    <property type="entry name" value="FLAGELLAR BIOSYNTHETIC PROTEIN FLHB"/>
    <property type="match status" value="1"/>
</dbReference>
<dbReference type="Pfam" id="PF01312">
    <property type="entry name" value="Bac_export_2"/>
    <property type="match status" value="1"/>
</dbReference>
<dbReference type="PRINTS" id="PR00950">
    <property type="entry name" value="TYPE3IMSPROT"/>
</dbReference>
<dbReference type="SUPFAM" id="SSF160544">
    <property type="entry name" value="EscU C-terminal domain-like"/>
    <property type="match status" value="1"/>
</dbReference>
<reference key="1">
    <citation type="journal article" date="1998" name="Nature">
        <title>The complete genome of the hyperthermophilic bacterium Aquifex aeolicus.</title>
        <authorList>
            <person name="Deckert G."/>
            <person name="Warren P.V."/>
            <person name="Gaasterland T."/>
            <person name="Young W.G."/>
            <person name="Lenox A.L."/>
            <person name="Graham D.E."/>
            <person name="Overbeek R."/>
            <person name="Snead M.A."/>
            <person name="Keller M."/>
            <person name="Aujay M."/>
            <person name="Huber R."/>
            <person name="Feldman R.A."/>
            <person name="Short J.M."/>
            <person name="Olsen G.J."/>
            <person name="Swanson R.V."/>
        </authorList>
    </citation>
    <scope>NUCLEOTIDE SEQUENCE [LARGE SCALE GENOMIC DNA]</scope>
    <source>
        <strain>VF5</strain>
    </source>
</reference>
<proteinExistence type="evidence at protein level"/>